<evidence type="ECO:0000255" key="1">
    <source>
        <dbReference type="HAMAP-Rule" id="MF_01302"/>
    </source>
</evidence>
<evidence type="ECO:0000305" key="2"/>
<feature type="chain" id="PRO_0000290892" description="Small ribosomal subunit protein uS8">
    <location>
        <begin position="1"/>
        <end position="133"/>
    </location>
</feature>
<protein>
    <recommendedName>
        <fullName evidence="1">Small ribosomal subunit protein uS8</fullName>
    </recommendedName>
    <alternativeName>
        <fullName evidence="2">30S ribosomal protein S8</fullName>
    </alternativeName>
</protein>
<organism>
    <name type="scientific">Oenococcus oeni (strain ATCC BAA-331 / PSU-1)</name>
    <dbReference type="NCBI Taxonomy" id="203123"/>
    <lineage>
        <taxon>Bacteria</taxon>
        <taxon>Bacillati</taxon>
        <taxon>Bacillota</taxon>
        <taxon>Bacilli</taxon>
        <taxon>Lactobacillales</taxon>
        <taxon>Lactobacillaceae</taxon>
        <taxon>Oenococcus</taxon>
    </lineage>
</organism>
<keyword id="KW-1185">Reference proteome</keyword>
<keyword id="KW-0687">Ribonucleoprotein</keyword>
<keyword id="KW-0689">Ribosomal protein</keyword>
<keyword id="KW-0694">RNA-binding</keyword>
<keyword id="KW-0699">rRNA-binding</keyword>
<accession>Q04G72</accession>
<sequence length="133" mass="14631">MTMSDPIADFLTRIRNANMVRHETVETPASKIKINIAQILKDEGFITDYQVVDTPNKQGLISLSLKYGPNRERIITGLKRISKPGLRSYVQADSVPKVLNGLGIAILSTSEGVMTDKAARAKMIGGEVIAYVW</sequence>
<dbReference type="EMBL" id="CP000411">
    <property type="protein sequence ID" value="ABJ56550.1"/>
    <property type="molecule type" value="Genomic_DNA"/>
</dbReference>
<dbReference type="RefSeq" id="WP_002818466.1">
    <property type="nucleotide sequence ID" value="NC_008528.1"/>
</dbReference>
<dbReference type="SMR" id="Q04G72"/>
<dbReference type="STRING" id="203123.OEOE_0608"/>
<dbReference type="GeneID" id="75065430"/>
<dbReference type="KEGG" id="ooe:OEOE_0608"/>
<dbReference type="eggNOG" id="COG0096">
    <property type="taxonomic scope" value="Bacteria"/>
</dbReference>
<dbReference type="HOGENOM" id="CLU_098428_0_2_9"/>
<dbReference type="Proteomes" id="UP000000774">
    <property type="component" value="Chromosome"/>
</dbReference>
<dbReference type="GO" id="GO:1990904">
    <property type="term" value="C:ribonucleoprotein complex"/>
    <property type="evidence" value="ECO:0007669"/>
    <property type="project" value="UniProtKB-KW"/>
</dbReference>
<dbReference type="GO" id="GO:0005840">
    <property type="term" value="C:ribosome"/>
    <property type="evidence" value="ECO:0007669"/>
    <property type="project" value="UniProtKB-KW"/>
</dbReference>
<dbReference type="GO" id="GO:0019843">
    <property type="term" value="F:rRNA binding"/>
    <property type="evidence" value="ECO:0007669"/>
    <property type="project" value="UniProtKB-UniRule"/>
</dbReference>
<dbReference type="GO" id="GO:0003735">
    <property type="term" value="F:structural constituent of ribosome"/>
    <property type="evidence" value="ECO:0007669"/>
    <property type="project" value="InterPro"/>
</dbReference>
<dbReference type="GO" id="GO:0006412">
    <property type="term" value="P:translation"/>
    <property type="evidence" value="ECO:0007669"/>
    <property type="project" value="UniProtKB-UniRule"/>
</dbReference>
<dbReference type="FunFam" id="3.30.1370.30:FF:000002">
    <property type="entry name" value="30S ribosomal protein S8"/>
    <property type="match status" value="1"/>
</dbReference>
<dbReference type="FunFam" id="3.30.1490.10:FF:000001">
    <property type="entry name" value="30S ribosomal protein S8"/>
    <property type="match status" value="1"/>
</dbReference>
<dbReference type="Gene3D" id="3.30.1370.30">
    <property type="match status" value="1"/>
</dbReference>
<dbReference type="Gene3D" id="3.30.1490.10">
    <property type="match status" value="1"/>
</dbReference>
<dbReference type="HAMAP" id="MF_01302_B">
    <property type="entry name" value="Ribosomal_uS8_B"/>
    <property type="match status" value="1"/>
</dbReference>
<dbReference type="InterPro" id="IPR000630">
    <property type="entry name" value="Ribosomal_uS8"/>
</dbReference>
<dbReference type="InterPro" id="IPR047863">
    <property type="entry name" value="Ribosomal_uS8_CS"/>
</dbReference>
<dbReference type="InterPro" id="IPR035987">
    <property type="entry name" value="Ribosomal_uS8_sf"/>
</dbReference>
<dbReference type="NCBIfam" id="NF001109">
    <property type="entry name" value="PRK00136.1"/>
    <property type="match status" value="1"/>
</dbReference>
<dbReference type="PANTHER" id="PTHR11758">
    <property type="entry name" value="40S RIBOSOMAL PROTEIN S15A"/>
    <property type="match status" value="1"/>
</dbReference>
<dbReference type="Pfam" id="PF00410">
    <property type="entry name" value="Ribosomal_S8"/>
    <property type="match status" value="1"/>
</dbReference>
<dbReference type="SUPFAM" id="SSF56047">
    <property type="entry name" value="Ribosomal protein S8"/>
    <property type="match status" value="1"/>
</dbReference>
<dbReference type="PROSITE" id="PS00053">
    <property type="entry name" value="RIBOSOMAL_S8"/>
    <property type="match status" value="1"/>
</dbReference>
<name>RS8_OENOB</name>
<reference key="1">
    <citation type="journal article" date="2006" name="Proc. Natl. Acad. Sci. U.S.A.">
        <title>Comparative genomics of the lactic acid bacteria.</title>
        <authorList>
            <person name="Makarova K.S."/>
            <person name="Slesarev A."/>
            <person name="Wolf Y.I."/>
            <person name="Sorokin A."/>
            <person name="Mirkin B."/>
            <person name="Koonin E.V."/>
            <person name="Pavlov A."/>
            <person name="Pavlova N."/>
            <person name="Karamychev V."/>
            <person name="Polouchine N."/>
            <person name="Shakhova V."/>
            <person name="Grigoriev I."/>
            <person name="Lou Y."/>
            <person name="Rohksar D."/>
            <person name="Lucas S."/>
            <person name="Huang K."/>
            <person name="Goodstein D.M."/>
            <person name="Hawkins T."/>
            <person name="Plengvidhya V."/>
            <person name="Welker D."/>
            <person name="Hughes J."/>
            <person name="Goh Y."/>
            <person name="Benson A."/>
            <person name="Baldwin K."/>
            <person name="Lee J.-H."/>
            <person name="Diaz-Muniz I."/>
            <person name="Dosti B."/>
            <person name="Smeianov V."/>
            <person name="Wechter W."/>
            <person name="Barabote R."/>
            <person name="Lorca G."/>
            <person name="Altermann E."/>
            <person name="Barrangou R."/>
            <person name="Ganesan B."/>
            <person name="Xie Y."/>
            <person name="Rawsthorne H."/>
            <person name="Tamir D."/>
            <person name="Parker C."/>
            <person name="Breidt F."/>
            <person name="Broadbent J.R."/>
            <person name="Hutkins R."/>
            <person name="O'Sullivan D."/>
            <person name="Steele J."/>
            <person name="Unlu G."/>
            <person name="Saier M.H. Jr."/>
            <person name="Klaenhammer T."/>
            <person name="Richardson P."/>
            <person name="Kozyavkin S."/>
            <person name="Weimer B.C."/>
            <person name="Mills D.A."/>
        </authorList>
    </citation>
    <scope>NUCLEOTIDE SEQUENCE [LARGE SCALE GENOMIC DNA]</scope>
    <source>
        <strain>ATCC BAA-331 / PSU-1</strain>
    </source>
</reference>
<comment type="function">
    <text evidence="1">One of the primary rRNA binding proteins, it binds directly to 16S rRNA central domain where it helps coordinate assembly of the platform of the 30S subunit.</text>
</comment>
<comment type="subunit">
    <text evidence="1">Part of the 30S ribosomal subunit. Contacts proteins S5 and S12.</text>
</comment>
<comment type="similarity">
    <text evidence="1">Belongs to the universal ribosomal protein uS8 family.</text>
</comment>
<proteinExistence type="inferred from homology"/>
<gene>
    <name evidence="1" type="primary">rpsH</name>
    <name type="ordered locus">OEOE_0608</name>
</gene>